<reference key="1">
    <citation type="journal article" date="2001" name="Proc. Natl. Acad. Sci. U.S.A.">
        <title>Genome sequence of an industrial microorganism Streptomyces avermitilis: deducing the ability of producing secondary metabolites.</title>
        <authorList>
            <person name="Omura S."/>
            <person name="Ikeda H."/>
            <person name="Ishikawa J."/>
            <person name="Hanamoto A."/>
            <person name="Takahashi C."/>
            <person name="Shinose M."/>
            <person name="Takahashi Y."/>
            <person name="Horikawa H."/>
            <person name="Nakazawa H."/>
            <person name="Osonoe T."/>
            <person name="Kikuchi H."/>
            <person name="Shiba T."/>
            <person name="Sakaki Y."/>
            <person name="Hattori M."/>
        </authorList>
    </citation>
    <scope>NUCLEOTIDE SEQUENCE [LARGE SCALE GENOMIC DNA]</scope>
    <source>
        <strain>ATCC 31267 / DSM 46492 / JCM 5070 / NBRC 14893 / NCIMB 12804 / NRRL 8165 / MA-4680</strain>
    </source>
</reference>
<reference key="2">
    <citation type="journal article" date="2003" name="Nat. Biotechnol.">
        <title>Complete genome sequence and comparative analysis of the industrial microorganism Streptomyces avermitilis.</title>
        <authorList>
            <person name="Ikeda H."/>
            <person name="Ishikawa J."/>
            <person name="Hanamoto A."/>
            <person name="Shinose M."/>
            <person name="Kikuchi H."/>
            <person name="Shiba T."/>
            <person name="Sakaki Y."/>
            <person name="Hattori M."/>
            <person name="Omura S."/>
        </authorList>
    </citation>
    <scope>NUCLEOTIDE SEQUENCE [LARGE SCALE GENOMIC DNA]</scope>
    <source>
        <strain>ATCC 31267 / DSM 46492 / JCM 5070 / NBRC 14893 / NCIMB 12804 / NRRL 8165 / MA-4680</strain>
    </source>
</reference>
<keyword id="KW-1185">Reference proteome</keyword>
<keyword id="KW-0687">Ribonucleoprotein</keyword>
<keyword id="KW-0689">Ribosomal protein</keyword>
<keyword id="KW-0694">RNA-binding</keyword>
<keyword id="KW-0699">rRNA-binding</keyword>
<dbReference type="EMBL" id="BA000030">
    <property type="protein sequence ID" value="BAC72657.1"/>
    <property type="molecule type" value="Genomic_DNA"/>
</dbReference>
<dbReference type="RefSeq" id="WP_010986355.1">
    <property type="nucleotide sequence ID" value="NZ_JZJK01000077.1"/>
</dbReference>
<dbReference type="SMR" id="Q82DM7"/>
<dbReference type="GeneID" id="41542028"/>
<dbReference type="KEGG" id="sma:SAVERM_4945"/>
<dbReference type="eggNOG" id="COG0200">
    <property type="taxonomic scope" value="Bacteria"/>
</dbReference>
<dbReference type="HOGENOM" id="CLU_055188_4_1_11"/>
<dbReference type="OrthoDB" id="9810293at2"/>
<dbReference type="Proteomes" id="UP000000428">
    <property type="component" value="Chromosome"/>
</dbReference>
<dbReference type="GO" id="GO:0022625">
    <property type="term" value="C:cytosolic large ribosomal subunit"/>
    <property type="evidence" value="ECO:0007669"/>
    <property type="project" value="TreeGrafter"/>
</dbReference>
<dbReference type="GO" id="GO:0019843">
    <property type="term" value="F:rRNA binding"/>
    <property type="evidence" value="ECO:0007669"/>
    <property type="project" value="UniProtKB-UniRule"/>
</dbReference>
<dbReference type="GO" id="GO:0003735">
    <property type="term" value="F:structural constituent of ribosome"/>
    <property type="evidence" value="ECO:0007669"/>
    <property type="project" value="InterPro"/>
</dbReference>
<dbReference type="GO" id="GO:0006412">
    <property type="term" value="P:translation"/>
    <property type="evidence" value="ECO:0007669"/>
    <property type="project" value="UniProtKB-UniRule"/>
</dbReference>
<dbReference type="FunFam" id="3.100.10.10:FF:000005">
    <property type="entry name" value="50S ribosomal protein L15"/>
    <property type="match status" value="1"/>
</dbReference>
<dbReference type="Gene3D" id="3.100.10.10">
    <property type="match status" value="1"/>
</dbReference>
<dbReference type="HAMAP" id="MF_01341">
    <property type="entry name" value="Ribosomal_uL15"/>
    <property type="match status" value="1"/>
</dbReference>
<dbReference type="InterPro" id="IPR030878">
    <property type="entry name" value="Ribosomal_uL15"/>
</dbReference>
<dbReference type="InterPro" id="IPR021131">
    <property type="entry name" value="Ribosomal_uL15/eL18"/>
</dbReference>
<dbReference type="InterPro" id="IPR036227">
    <property type="entry name" value="Ribosomal_uL15/eL18_sf"/>
</dbReference>
<dbReference type="InterPro" id="IPR005749">
    <property type="entry name" value="Ribosomal_uL15_bac-type"/>
</dbReference>
<dbReference type="InterPro" id="IPR001196">
    <property type="entry name" value="Ribosomal_uL15_CS"/>
</dbReference>
<dbReference type="NCBIfam" id="TIGR01071">
    <property type="entry name" value="rplO_bact"/>
    <property type="match status" value="1"/>
</dbReference>
<dbReference type="PANTHER" id="PTHR12934">
    <property type="entry name" value="50S RIBOSOMAL PROTEIN L15"/>
    <property type="match status" value="1"/>
</dbReference>
<dbReference type="PANTHER" id="PTHR12934:SF11">
    <property type="entry name" value="LARGE RIBOSOMAL SUBUNIT PROTEIN UL15M"/>
    <property type="match status" value="1"/>
</dbReference>
<dbReference type="Pfam" id="PF00828">
    <property type="entry name" value="Ribosomal_L27A"/>
    <property type="match status" value="1"/>
</dbReference>
<dbReference type="SUPFAM" id="SSF52080">
    <property type="entry name" value="Ribosomal proteins L15p and L18e"/>
    <property type="match status" value="1"/>
</dbReference>
<dbReference type="PROSITE" id="PS00475">
    <property type="entry name" value="RIBOSOMAL_L15"/>
    <property type="match status" value="1"/>
</dbReference>
<evidence type="ECO:0000255" key="1">
    <source>
        <dbReference type="HAMAP-Rule" id="MF_01341"/>
    </source>
</evidence>
<evidence type="ECO:0000256" key="2">
    <source>
        <dbReference type="SAM" id="MobiDB-lite"/>
    </source>
</evidence>
<evidence type="ECO:0000305" key="3"/>
<feature type="chain" id="PRO_0000104831" description="Large ribosomal subunit protein uL15">
    <location>
        <begin position="1"/>
        <end position="151"/>
    </location>
</feature>
<feature type="region of interest" description="Disordered" evidence="2">
    <location>
        <begin position="1"/>
        <end position="60"/>
    </location>
</feature>
<sequence length="151" mass="16022">MAENNPLKIHNLRPAPGAKTAKTRVGRGEASKGKTAGRGTKGTKARYQVPERFEGGQMPLHMRLPKLKGFKNPFRTEYQVVNLDKLTALYPEGGEVTVEGLVAKGAVRKNSLVKVLGQGEISVALQVTVDAVSGSAKEKITAAGGTVTELV</sequence>
<name>RL15_STRAW</name>
<organism>
    <name type="scientific">Streptomyces avermitilis (strain ATCC 31267 / DSM 46492 / JCM 5070 / NBRC 14893 / NCIMB 12804 / NRRL 8165 / MA-4680)</name>
    <dbReference type="NCBI Taxonomy" id="227882"/>
    <lineage>
        <taxon>Bacteria</taxon>
        <taxon>Bacillati</taxon>
        <taxon>Actinomycetota</taxon>
        <taxon>Actinomycetes</taxon>
        <taxon>Kitasatosporales</taxon>
        <taxon>Streptomycetaceae</taxon>
        <taxon>Streptomyces</taxon>
    </lineage>
</organism>
<proteinExistence type="inferred from homology"/>
<comment type="function">
    <text evidence="1">Binds to the 23S rRNA.</text>
</comment>
<comment type="subunit">
    <text evidence="1">Part of the 50S ribosomal subunit.</text>
</comment>
<comment type="similarity">
    <text evidence="1">Belongs to the universal ribosomal protein uL15 family.</text>
</comment>
<gene>
    <name evidence="1" type="primary">rplO</name>
    <name type="ordered locus">SAV_4945</name>
</gene>
<accession>Q82DM7</accession>
<protein>
    <recommendedName>
        <fullName evidence="1">Large ribosomal subunit protein uL15</fullName>
    </recommendedName>
    <alternativeName>
        <fullName evidence="3">50S ribosomal protein L15</fullName>
    </alternativeName>
</protein>